<name>FKB1B_NEUCR</name>
<keyword id="KW-0963">Cytoplasm</keyword>
<keyword id="KW-0413">Isomerase</keyword>
<keyword id="KW-1185">Reference proteome</keyword>
<keyword id="KW-0697">Rotamase</keyword>
<evidence type="ECO:0000250" key="1"/>
<evidence type="ECO:0000255" key="2">
    <source>
        <dbReference type="PROSITE-ProRule" id="PRU00277"/>
    </source>
</evidence>
<evidence type="ECO:0000305" key="3"/>
<organism>
    <name type="scientific">Neurospora crassa (strain ATCC 24698 / 74-OR23-1A / CBS 708.71 / DSM 1257 / FGSC 987)</name>
    <dbReference type="NCBI Taxonomy" id="367110"/>
    <lineage>
        <taxon>Eukaryota</taxon>
        <taxon>Fungi</taxon>
        <taxon>Dikarya</taxon>
        <taxon>Ascomycota</taxon>
        <taxon>Pezizomycotina</taxon>
        <taxon>Sordariomycetes</taxon>
        <taxon>Sordariomycetidae</taxon>
        <taxon>Sordariales</taxon>
        <taxon>Sordariaceae</taxon>
        <taxon>Neurospora</taxon>
    </lineage>
</organism>
<gene>
    <name type="primary">fkr-3</name>
    <name type="ORF">29E8.450</name>
    <name type="ORF">NCU04371</name>
</gene>
<dbReference type="EC" id="5.2.1.8"/>
<dbReference type="EMBL" id="BX908809">
    <property type="protein sequence ID" value="CAF06078.1"/>
    <property type="status" value="ALT_SEQ"/>
    <property type="molecule type" value="Genomic_DNA"/>
</dbReference>
<dbReference type="EMBL" id="CM002239">
    <property type="protein sequence ID" value="EAA26908.2"/>
    <property type="molecule type" value="Genomic_DNA"/>
</dbReference>
<dbReference type="RefSeq" id="XP_956144.2">
    <property type="nucleotide sequence ID" value="XM_951051.2"/>
</dbReference>
<dbReference type="SMR" id="Q6M981"/>
<dbReference type="STRING" id="367110.Q6M981"/>
<dbReference type="PaxDb" id="5141-EFNCRP00000005192"/>
<dbReference type="EnsemblFungi" id="EAA26908">
    <property type="protein sequence ID" value="EAA26908"/>
    <property type="gene ID" value="NCU04371"/>
</dbReference>
<dbReference type="GeneID" id="3872282"/>
<dbReference type="KEGG" id="ncr:NCU04371"/>
<dbReference type="VEuPathDB" id="FungiDB:NCU04371"/>
<dbReference type="HOGENOM" id="CLU_013615_12_1_1"/>
<dbReference type="InParanoid" id="Q6M981"/>
<dbReference type="OrthoDB" id="1902587at2759"/>
<dbReference type="Proteomes" id="UP000001805">
    <property type="component" value="Chromosome 4, Linkage Group IV"/>
</dbReference>
<dbReference type="GO" id="GO:0005737">
    <property type="term" value="C:cytoplasm"/>
    <property type="evidence" value="ECO:0000318"/>
    <property type="project" value="GO_Central"/>
</dbReference>
<dbReference type="GO" id="GO:0003755">
    <property type="term" value="F:peptidyl-prolyl cis-trans isomerase activity"/>
    <property type="evidence" value="ECO:0000318"/>
    <property type="project" value="GO_Central"/>
</dbReference>
<dbReference type="FunFam" id="3.10.50.40:FF:000050">
    <property type="entry name" value="Peptidylprolyl isomerase"/>
    <property type="match status" value="1"/>
</dbReference>
<dbReference type="Gene3D" id="3.10.50.40">
    <property type="match status" value="1"/>
</dbReference>
<dbReference type="InterPro" id="IPR050689">
    <property type="entry name" value="FKBP-type_PPIase"/>
</dbReference>
<dbReference type="InterPro" id="IPR046357">
    <property type="entry name" value="PPIase_dom_sf"/>
</dbReference>
<dbReference type="InterPro" id="IPR001179">
    <property type="entry name" value="PPIase_FKBP_dom"/>
</dbReference>
<dbReference type="PANTHER" id="PTHR10516:SF447">
    <property type="entry name" value="FK506-BINDING PROTEIN 1B"/>
    <property type="match status" value="1"/>
</dbReference>
<dbReference type="PANTHER" id="PTHR10516">
    <property type="entry name" value="PEPTIDYL-PROLYL CIS-TRANS ISOMERASE"/>
    <property type="match status" value="1"/>
</dbReference>
<dbReference type="Pfam" id="PF00254">
    <property type="entry name" value="FKBP_C"/>
    <property type="match status" value="1"/>
</dbReference>
<dbReference type="SUPFAM" id="SSF54534">
    <property type="entry name" value="FKBP-like"/>
    <property type="match status" value="1"/>
</dbReference>
<dbReference type="PROSITE" id="PS50059">
    <property type="entry name" value="FKBP_PPIASE"/>
    <property type="match status" value="1"/>
</dbReference>
<proteinExistence type="inferred from homology"/>
<protein>
    <recommendedName>
        <fullName>FK506-binding protein 1B</fullName>
        <shortName>FKBP-1B</shortName>
        <ecNumber>5.2.1.8</ecNumber>
    </recommendedName>
    <alternativeName>
        <fullName>FK506-resistance protein 3</fullName>
    </alternativeName>
    <alternativeName>
        <fullName>Peptidyl-prolyl cis-trans isomerase fkr-3</fullName>
        <shortName>PPIase fkr-3</shortName>
    </alternativeName>
    <alternativeName>
        <fullName>Rapamycin-binding protein</fullName>
    </alternativeName>
</protein>
<accession>Q6M981</accession>
<accession>Q7RWQ9</accession>
<sequence length="113" mass="12139">MGVNKITHVAGTGPQPEAGQTVVIEYTGWLKDSSQADGKGAEFDSSIGRGDFVTQIGVGRLIRGWDEAVLKMKVGEKATLDISSDYGYGERGFHGHIPPNADLIFDVYLKGLQ</sequence>
<reference key="1">
    <citation type="journal article" date="2003" name="Nucleic Acids Res.">
        <title>What's in the genome of a filamentous fungus? Analysis of the Neurospora genome sequence.</title>
        <authorList>
            <person name="Mannhaupt G."/>
            <person name="Montrone C."/>
            <person name="Haase D."/>
            <person name="Mewes H.-W."/>
            <person name="Aign V."/>
            <person name="Hoheisel J.D."/>
            <person name="Fartmann B."/>
            <person name="Nyakatura G."/>
            <person name="Kempken F."/>
            <person name="Maier J."/>
            <person name="Schulte U."/>
        </authorList>
    </citation>
    <scope>NUCLEOTIDE SEQUENCE [LARGE SCALE GENOMIC DNA]</scope>
    <source>
        <strain>ATCC 24698 / 74-OR23-1A / CBS 708.71 / DSM 1257 / FGSC 987</strain>
    </source>
</reference>
<reference key="2">
    <citation type="journal article" date="2003" name="Nature">
        <title>The genome sequence of the filamentous fungus Neurospora crassa.</title>
        <authorList>
            <person name="Galagan J.E."/>
            <person name="Calvo S.E."/>
            <person name="Borkovich K.A."/>
            <person name="Selker E.U."/>
            <person name="Read N.D."/>
            <person name="Jaffe D.B."/>
            <person name="FitzHugh W."/>
            <person name="Ma L.-J."/>
            <person name="Smirnov S."/>
            <person name="Purcell S."/>
            <person name="Rehman B."/>
            <person name="Elkins T."/>
            <person name="Engels R."/>
            <person name="Wang S."/>
            <person name="Nielsen C.B."/>
            <person name="Butler J."/>
            <person name="Endrizzi M."/>
            <person name="Qui D."/>
            <person name="Ianakiev P."/>
            <person name="Bell-Pedersen D."/>
            <person name="Nelson M.A."/>
            <person name="Werner-Washburne M."/>
            <person name="Selitrennikoff C.P."/>
            <person name="Kinsey J.A."/>
            <person name="Braun E.L."/>
            <person name="Zelter A."/>
            <person name="Schulte U."/>
            <person name="Kothe G.O."/>
            <person name="Jedd G."/>
            <person name="Mewes H.-W."/>
            <person name="Staben C."/>
            <person name="Marcotte E."/>
            <person name="Greenberg D."/>
            <person name="Roy A."/>
            <person name="Foley K."/>
            <person name="Naylor J."/>
            <person name="Stange-Thomann N."/>
            <person name="Barrett R."/>
            <person name="Gnerre S."/>
            <person name="Kamal M."/>
            <person name="Kamvysselis M."/>
            <person name="Mauceli E.W."/>
            <person name="Bielke C."/>
            <person name="Rudd S."/>
            <person name="Frishman D."/>
            <person name="Krystofova S."/>
            <person name="Rasmussen C."/>
            <person name="Metzenberg R.L."/>
            <person name="Perkins D.D."/>
            <person name="Kroken S."/>
            <person name="Cogoni C."/>
            <person name="Macino G."/>
            <person name="Catcheside D.E.A."/>
            <person name="Li W."/>
            <person name="Pratt R.J."/>
            <person name="Osmani S.A."/>
            <person name="DeSouza C.P.C."/>
            <person name="Glass N.L."/>
            <person name="Orbach M.J."/>
            <person name="Berglund J.A."/>
            <person name="Voelker R."/>
            <person name="Yarden O."/>
            <person name="Plamann M."/>
            <person name="Seiler S."/>
            <person name="Dunlap J.C."/>
            <person name="Radford A."/>
            <person name="Aramayo R."/>
            <person name="Natvig D.O."/>
            <person name="Alex L.A."/>
            <person name="Mannhaupt G."/>
            <person name="Ebbole D.J."/>
            <person name="Freitag M."/>
            <person name="Paulsen I."/>
            <person name="Sachs M.S."/>
            <person name="Lander E.S."/>
            <person name="Nusbaum C."/>
            <person name="Birren B.W."/>
        </authorList>
    </citation>
    <scope>NUCLEOTIDE SEQUENCE [LARGE SCALE GENOMIC DNA]</scope>
    <source>
        <strain>ATCC 24698 / 74-OR23-1A / CBS 708.71 / DSM 1257 / FGSC 987</strain>
    </source>
</reference>
<comment type="function">
    <text evidence="1">PPIases accelerate the folding of proteins. It catalyzes the cis-trans isomerization of proline imidic peptide bonds in oligopeptides (By similarity).</text>
</comment>
<comment type="catalytic activity">
    <reaction>
        <text>[protein]-peptidylproline (omega=180) = [protein]-peptidylproline (omega=0)</text>
        <dbReference type="Rhea" id="RHEA:16237"/>
        <dbReference type="Rhea" id="RHEA-COMP:10747"/>
        <dbReference type="Rhea" id="RHEA-COMP:10748"/>
        <dbReference type="ChEBI" id="CHEBI:83833"/>
        <dbReference type="ChEBI" id="CHEBI:83834"/>
        <dbReference type="EC" id="5.2.1.8"/>
    </reaction>
</comment>
<comment type="activity regulation">
    <text evidence="1">Inhibited by both FK506 and rapamycin.</text>
</comment>
<comment type="subcellular location">
    <subcellularLocation>
        <location evidence="1">Cytoplasm</location>
    </subcellularLocation>
</comment>
<comment type="similarity">
    <text evidence="3">Belongs to the FKBP-type PPIase family. FKBP1 subfamily.</text>
</comment>
<comment type="sequence caution" evidence="3">
    <conflict type="erroneous gene model prediction">
        <sequence resource="EMBL-CDS" id="CAF06078"/>
    </conflict>
</comment>
<feature type="chain" id="PRO_0000233329" description="FK506-binding protein 1B">
    <location>
        <begin position="1"/>
        <end position="113"/>
    </location>
</feature>
<feature type="domain" description="PPIase FKBP-type" evidence="2">
    <location>
        <begin position="19"/>
        <end position="113"/>
    </location>
</feature>